<feature type="chain" id="PRO_0000138265" description="CTP synthase">
    <location>
        <begin position="1"/>
        <end position="530"/>
    </location>
</feature>
<feature type="domain" description="Glutamine amidotransferase type-1" evidence="1">
    <location>
        <begin position="289"/>
        <end position="530"/>
    </location>
</feature>
<feature type="region of interest" description="Amidoligase domain" evidence="1">
    <location>
        <begin position="1"/>
        <end position="264"/>
    </location>
</feature>
<feature type="active site" description="Nucleophile; for glutamine hydrolysis" evidence="1">
    <location>
        <position position="378"/>
    </location>
</feature>
<feature type="active site" evidence="1">
    <location>
        <position position="504"/>
    </location>
</feature>
<feature type="active site" evidence="1">
    <location>
        <position position="506"/>
    </location>
</feature>
<feature type="binding site" evidence="1">
    <location>
        <position position="13"/>
    </location>
    <ligand>
        <name>CTP</name>
        <dbReference type="ChEBI" id="CHEBI:37563"/>
        <note>allosteric inhibitor</note>
    </ligand>
</feature>
<feature type="binding site" evidence="1">
    <location>
        <position position="13"/>
    </location>
    <ligand>
        <name>UTP</name>
        <dbReference type="ChEBI" id="CHEBI:46398"/>
    </ligand>
</feature>
<feature type="binding site" evidence="1">
    <location>
        <begin position="14"/>
        <end position="19"/>
    </location>
    <ligand>
        <name>ATP</name>
        <dbReference type="ChEBI" id="CHEBI:30616"/>
    </ligand>
</feature>
<feature type="binding site" evidence="1">
    <location>
        <position position="54"/>
    </location>
    <ligand>
        <name>L-glutamine</name>
        <dbReference type="ChEBI" id="CHEBI:58359"/>
    </ligand>
</feature>
<feature type="binding site" evidence="1">
    <location>
        <position position="71"/>
    </location>
    <ligand>
        <name>ATP</name>
        <dbReference type="ChEBI" id="CHEBI:30616"/>
    </ligand>
</feature>
<feature type="binding site" evidence="1">
    <location>
        <position position="71"/>
    </location>
    <ligand>
        <name>Mg(2+)</name>
        <dbReference type="ChEBI" id="CHEBI:18420"/>
    </ligand>
</feature>
<feature type="binding site" evidence="1">
    <location>
        <position position="139"/>
    </location>
    <ligand>
        <name>Mg(2+)</name>
        <dbReference type="ChEBI" id="CHEBI:18420"/>
    </ligand>
</feature>
<feature type="binding site" evidence="1">
    <location>
        <begin position="146"/>
        <end position="148"/>
    </location>
    <ligand>
        <name>CTP</name>
        <dbReference type="ChEBI" id="CHEBI:37563"/>
        <note>allosteric inhibitor</note>
    </ligand>
</feature>
<feature type="binding site" evidence="1">
    <location>
        <begin position="185"/>
        <end position="190"/>
    </location>
    <ligand>
        <name>CTP</name>
        <dbReference type="ChEBI" id="CHEBI:37563"/>
        <note>allosteric inhibitor</note>
    </ligand>
</feature>
<feature type="binding site" evidence="1">
    <location>
        <begin position="185"/>
        <end position="190"/>
    </location>
    <ligand>
        <name>UTP</name>
        <dbReference type="ChEBI" id="CHEBI:46398"/>
    </ligand>
</feature>
<feature type="binding site" evidence="1">
    <location>
        <position position="221"/>
    </location>
    <ligand>
        <name>CTP</name>
        <dbReference type="ChEBI" id="CHEBI:37563"/>
        <note>allosteric inhibitor</note>
    </ligand>
</feature>
<feature type="binding site" evidence="1">
    <location>
        <position position="221"/>
    </location>
    <ligand>
        <name>UTP</name>
        <dbReference type="ChEBI" id="CHEBI:46398"/>
    </ligand>
</feature>
<feature type="binding site" evidence="1">
    <location>
        <position position="351"/>
    </location>
    <ligand>
        <name>L-glutamine</name>
        <dbReference type="ChEBI" id="CHEBI:58359"/>
    </ligand>
</feature>
<feature type="binding site" evidence="1">
    <location>
        <begin position="379"/>
        <end position="382"/>
    </location>
    <ligand>
        <name>L-glutamine</name>
        <dbReference type="ChEBI" id="CHEBI:58359"/>
    </ligand>
</feature>
<feature type="binding site" evidence="1">
    <location>
        <position position="402"/>
    </location>
    <ligand>
        <name>L-glutamine</name>
        <dbReference type="ChEBI" id="CHEBI:58359"/>
    </ligand>
</feature>
<feature type="binding site" evidence="1">
    <location>
        <position position="459"/>
    </location>
    <ligand>
        <name>L-glutamine</name>
        <dbReference type="ChEBI" id="CHEBI:58359"/>
    </ligand>
</feature>
<sequence length="530" mass="59095">MPKLIIVTGGVMSGVGKGVVVASIGRILRARGLSVNAVKIDPYINVDAGTMNPYAHGEVFVTYDGGETDLDLGHYERFLDVELSKRNNITSGQIYLTVIEKERRGEYLGQTVQLIPHVTDEIKRRIVEASGGYDVTLVEIGGTVGDYEQLPFLEAARQLGLELGEDVVFIHVAWVPLLKITGEFKTKPLQHSVAELRRYGIQPDAVVVRSEKPIDANSIKKIALFAHVPQWAIFNSYDVDTIYRVPLILEQQGLGDFLTRRLRLPSRSPEYRDWEEFLSKLSAPKYRISVGMCGKYVELPDAYLSIVEALKHAGAALDARPELVWINSVEVEKNPDILRKLDLDAIVVLPGFGKRGTEGMIECIRHARMEKIPFLGICFGMQLAVVEFARNVLGLKGANSTELDPETPHPVVHLAPEQREVDVLGGSMILGNREVEIVPGTLAASLYGVSVITERHRHRYEVNLSYLPKFTEAGLVVSGWRRDIKRVEIIELPGHPYFIATQFHPEFKSRPAKPRPVFLGLLKAALFAKR</sequence>
<reference key="1">
    <citation type="journal article" date="2002" name="Proc. Natl. Acad. Sci. U.S.A.">
        <title>Genome sequence of the hyperthermophilic crenarchaeon Pyrobaculum aerophilum.</title>
        <authorList>
            <person name="Fitz-Gibbon S.T."/>
            <person name="Ladner H."/>
            <person name="Kim U.-J."/>
            <person name="Stetter K.O."/>
            <person name="Simon M.I."/>
            <person name="Miller J.H."/>
        </authorList>
    </citation>
    <scope>NUCLEOTIDE SEQUENCE [LARGE SCALE GENOMIC DNA]</scope>
    <source>
        <strain>ATCC 51768 / DSM 7523 / JCM 9630 / CIP 104966 / NBRC 100827 / IM2</strain>
    </source>
</reference>
<proteinExistence type="inferred from homology"/>
<keyword id="KW-0067">ATP-binding</keyword>
<keyword id="KW-0315">Glutamine amidotransferase</keyword>
<keyword id="KW-0436">Ligase</keyword>
<keyword id="KW-0460">Magnesium</keyword>
<keyword id="KW-0479">Metal-binding</keyword>
<keyword id="KW-0547">Nucleotide-binding</keyword>
<keyword id="KW-0665">Pyrimidine biosynthesis</keyword>
<keyword id="KW-1185">Reference proteome</keyword>
<accession>Q8ZSY7</accession>
<organism>
    <name type="scientific">Pyrobaculum aerophilum (strain ATCC 51768 / DSM 7523 / JCM 9630 / CIP 104966 / NBRC 100827 / IM2)</name>
    <dbReference type="NCBI Taxonomy" id="178306"/>
    <lineage>
        <taxon>Archaea</taxon>
        <taxon>Thermoproteota</taxon>
        <taxon>Thermoprotei</taxon>
        <taxon>Thermoproteales</taxon>
        <taxon>Thermoproteaceae</taxon>
        <taxon>Pyrobaculum</taxon>
    </lineage>
</organism>
<gene>
    <name evidence="1" type="primary">pyrG</name>
    <name type="ordered locus">PAE3518</name>
</gene>
<evidence type="ECO:0000255" key="1">
    <source>
        <dbReference type="HAMAP-Rule" id="MF_01227"/>
    </source>
</evidence>
<comment type="function">
    <text evidence="1">Catalyzes the ATP-dependent amination of UTP to CTP with either L-glutamine or ammonia as the source of nitrogen. Regulates intracellular CTP levels through interactions with the four ribonucleotide triphosphates.</text>
</comment>
<comment type="catalytic activity">
    <reaction evidence="1">
        <text>UTP + L-glutamine + ATP + H2O = CTP + L-glutamate + ADP + phosphate + 2 H(+)</text>
        <dbReference type="Rhea" id="RHEA:26426"/>
        <dbReference type="ChEBI" id="CHEBI:15377"/>
        <dbReference type="ChEBI" id="CHEBI:15378"/>
        <dbReference type="ChEBI" id="CHEBI:29985"/>
        <dbReference type="ChEBI" id="CHEBI:30616"/>
        <dbReference type="ChEBI" id="CHEBI:37563"/>
        <dbReference type="ChEBI" id="CHEBI:43474"/>
        <dbReference type="ChEBI" id="CHEBI:46398"/>
        <dbReference type="ChEBI" id="CHEBI:58359"/>
        <dbReference type="ChEBI" id="CHEBI:456216"/>
        <dbReference type="EC" id="6.3.4.2"/>
    </reaction>
</comment>
<comment type="catalytic activity">
    <reaction evidence="1">
        <text>L-glutamine + H2O = L-glutamate + NH4(+)</text>
        <dbReference type="Rhea" id="RHEA:15889"/>
        <dbReference type="ChEBI" id="CHEBI:15377"/>
        <dbReference type="ChEBI" id="CHEBI:28938"/>
        <dbReference type="ChEBI" id="CHEBI:29985"/>
        <dbReference type="ChEBI" id="CHEBI:58359"/>
    </reaction>
</comment>
<comment type="catalytic activity">
    <reaction evidence="1">
        <text>UTP + NH4(+) + ATP = CTP + ADP + phosphate + 2 H(+)</text>
        <dbReference type="Rhea" id="RHEA:16597"/>
        <dbReference type="ChEBI" id="CHEBI:15378"/>
        <dbReference type="ChEBI" id="CHEBI:28938"/>
        <dbReference type="ChEBI" id="CHEBI:30616"/>
        <dbReference type="ChEBI" id="CHEBI:37563"/>
        <dbReference type="ChEBI" id="CHEBI:43474"/>
        <dbReference type="ChEBI" id="CHEBI:46398"/>
        <dbReference type="ChEBI" id="CHEBI:456216"/>
    </reaction>
</comment>
<comment type="activity regulation">
    <text evidence="1">Allosterically activated by GTP, when glutamine is the substrate; GTP has no effect on the reaction when ammonia is the substrate. The allosteric effector GTP functions by stabilizing the protein conformation that binds the tetrahedral intermediate(s) formed during glutamine hydrolysis. Inhibited by the product CTP, via allosteric rather than competitive inhibition.</text>
</comment>
<comment type="pathway">
    <text evidence="1">Pyrimidine metabolism; CTP biosynthesis via de novo pathway; CTP from UDP: step 2/2.</text>
</comment>
<comment type="subunit">
    <text evidence="1">Homotetramer.</text>
</comment>
<comment type="miscellaneous">
    <text evidence="1">CTPSs have evolved a hybrid strategy for distinguishing between UTP and CTP. The overlapping regions of the product feedback inhibitory and substrate sites recognize a common feature in both compounds, the triphosphate moiety. To differentiate isosteric substrate and product pyrimidine rings, an additional pocket far from the expected kinase/ligase catalytic site, specifically recognizes the cytosine and ribose portions of the product inhibitor.</text>
</comment>
<comment type="similarity">
    <text evidence="1">Belongs to the CTP synthase family.</text>
</comment>
<name>PYRG_PYRAE</name>
<protein>
    <recommendedName>
        <fullName evidence="1">CTP synthase</fullName>
        <ecNumber evidence="1">6.3.4.2</ecNumber>
    </recommendedName>
    <alternativeName>
        <fullName evidence="1">Cytidine 5'-triphosphate synthase</fullName>
    </alternativeName>
    <alternativeName>
        <fullName evidence="1">Cytidine triphosphate synthetase</fullName>
        <shortName evidence="1">CTP synthetase</shortName>
        <shortName evidence="1">CTPS</shortName>
    </alternativeName>
    <alternativeName>
        <fullName evidence="1">UTP--ammonia ligase</fullName>
    </alternativeName>
</protein>
<dbReference type="EC" id="6.3.4.2" evidence="1"/>
<dbReference type="EMBL" id="AE009441">
    <property type="protein sequence ID" value="AAL64976.1"/>
    <property type="molecule type" value="Genomic_DNA"/>
</dbReference>
<dbReference type="RefSeq" id="WP_011009443.1">
    <property type="nucleotide sequence ID" value="NC_003364.1"/>
</dbReference>
<dbReference type="SMR" id="Q8ZSY7"/>
<dbReference type="FunCoup" id="Q8ZSY7">
    <property type="interactions" value="215"/>
</dbReference>
<dbReference type="STRING" id="178306.PAE3518"/>
<dbReference type="MEROPS" id="C26.964"/>
<dbReference type="EnsemblBacteria" id="AAL64976">
    <property type="protein sequence ID" value="AAL64976"/>
    <property type="gene ID" value="PAE3518"/>
</dbReference>
<dbReference type="GeneID" id="1466110"/>
<dbReference type="KEGG" id="pai:PAE3518"/>
<dbReference type="PATRIC" id="fig|178306.9.peg.2649"/>
<dbReference type="eggNOG" id="arCOG00063">
    <property type="taxonomic scope" value="Archaea"/>
</dbReference>
<dbReference type="HOGENOM" id="CLU_011675_5_0_2"/>
<dbReference type="InParanoid" id="Q8ZSY7"/>
<dbReference type="UniPathway" id="UPA00159">
    <property type="reaction ID" value="UER00277"/>
</dbReference>
<dbReference type="Proteomes" id="UP000002439">
    <property type="component" value="Chromosome"/>
</dbReference>
<dbReference type="GO" id="GO:0005524">
    <property type="term" value="F:ATP binding"/>
    <property type="evidence" value="ECO:0007669"/>
    <property type="project" value="UniProtKB-KW"/>
</dbReference>
<dbReference type="GO" id="GO:0003883">
    <property type="term" value="F:CTP synthase activity"/>
    <property type="evidence" value="ECO:0000318"/>
    <property type="project" value="GO_Central"/>
</dbReference>
<dbReference type="GO" id="GO:0004359">
    <property type="term" value="F:glutaminase activity"/>
    <property type="evidence" value="ECO:0007669"/>
    <property type="project" value="RHEA"/>
</dbReference>
<dbReference type="GO" id="GO:0042802">
    <property type="term" value="F:identical protein binding"/>
    <property type="evidence" value="ECO:0000318"/>
    <property type="project" value="GO_Central"/>
</dbReference>
<dbReference type="GO" id="GO:0046872">
    <property type="term" value="F:metal ion binding"/>
    <property type="evidence" value="ECO:0007669"/>
    <property type="project" value="UniProtKB-KW"/>
</dbReference>
<dbReference type="GO" id="GO:0044210">
    <property type="term" value="P:'de novo' CTP biosynthetic process"/>
    <property type="evidence" value="ECO:0007669"/>
    <property type="project" value="UniProtKB-UniRule"/>
</dbReference>
<dbReference type="GO" id="GO:0006241">
    <property type="term" value="P:CTP biosynthetic process"/>
    <property type="evidence" value="ECO:0000318"/>
    <property type="project" value="GO_Central"/>
</dbReference>
<dbReference type="GO" id="GO:0019856">
    <property type="term" value="P:pyrimidine nucleobase biosynthetic process"/>
    <property type="evidence" value="ECO:0000318"/>
    <property type="project" value="GO_Central"/>
</dbReference>
<dbReference type="CDD" id="cd03113">
    <property type="entry name" value="CTPS_N"/>
    <property type="match status" value="1"/>
</dbReference>
<dbReference type="CDD" id="cd01746">
    <property type="entry name" value="GATase1_CTP_Synthase"/>
    <property type="match status" value="1"/>
</dbReference>
<dbReference type="FunFam" id="3.40.50.300:FF:000009">
    <property type="entry name" value="CTP synthase"/>
    <property type="match status" value="1"/>
</dbReference>
<dbReference type="FunFam" id="3.40.50.880:FF:000002">
    <property type="entry name" value="CTP synthase"/>
    <property type="match status" value="1"/>
</dbReference>
<dbReference type="Gene3D" id="3.40.50.880">
    <property type="match status" value="1"/>
</dbReference>
<dbReference type="Gene3D" id="3.40.50.300">
    <property type="entry name" value="P-loop containing nucleotide triphosphate hydrolases"/>
    <property type="match status" value="1"/>
</dbReference>
<dbReference type="HAMAP" id="MF_01227">
    <property type="entry name" value="PyrG"/>
    <property type="match status" value="1"/>
</dbReference>
<dbReference type="InterPro" id="IPR029062">
    <property type="entry name" value="Class_I_gatase-like"/>
</dbReference>
<dbReference type="InterPro" id="IPR004468">
    <property type="entry name" value="CTP_synthase"/>
</dbReference>
<dbReference type="InterPro" id="IPR017456">
    <property type="entry name" value="CTP_synthase_N"/>
</dbReference>
<dbReference type="InterPro" id="IPR017926">
    <property type="entry name" value="GATASE"/>
</dbReference>
<dbReference type="InterPro" id="IPR033828">
    <property type="entry name" value="GATase1_CTP_Synthase"/>
</dbReference>
<dbReference type="InterPro" id="IPR027417">
    <property type="entry name" value="P-loop_NTPase"/>
</dbReference>
<dbReference type="NCBIfam" id="NF003792">
    <property type="entry name" value="PRK05380.1"/>
    <property type="match status" value="1"/>
</dbReference>
<dbReference type="NCBIfam" id="TIGR00337">
    <property type="entry name" value="PyrG"/>
    <property type="match status" value="1"/>
</dbReference>
<dbReference type="PANTHER" id="PTHR11550">
    <property type="entry name" value="CTP SYNTHASE"/>
    <property type="match status" value="1"/>
</dbReference>
<dbReference type="PANTHER" id="PTHR11550:SF0">
    <property type="entry name" value="CTP SYNTHASE-RELATED"/>
    <property type="match status" value="1"/>
</dbReference>
<dbReference type="Pfam" id="PF06418">
    <property type="entry name" value="CTP_synth_N"/>
    <property type="match status" value="1"/>
</dbReference>
<dbReference type="Pfam" id="PF00117">
    <property type="entry name" value="GATase"/>
    <property type="match status" value="1"/>
</dbReference>
<dbReference type="SUPFAM" id="SSF52317">
    <property type="entry name" value="Class I glutamine amidotransferase-like"/>
    <property type="match status" value="1"/>
</dbReference>
<dbReference type="SUPFAM" id="SSF52540">
    <property type="entry name" value="P-loop containing nucleoside triphosphate hydrolases"/>
    <property type="match status" value="1"/>
</dbReference>
<dbReference type="PROSITE" id="PS51273">
    <property type="entry name" value="GATASE_TYPE_1"/>
    <property type="match status" value="1"/>
</dbReference>